<protein>
    <recommendedName>
        <fullName evidence="1">Large ribosomal subunit protein uL11</fullName>
    </recommendedName>
    <alternativeName>
        <fullName evidence="2">50S ribosomal protein L11</fullName>
    </alternativeName>
</protein>
<reference key="1">
    <citation type="journal article" date="2003" name="Proc. Natl. Acad. Sci. U.S.A.">
        <title>The complete genome sequence of the Arabidopsis and tomato pathogen Pseudomonas syringae pv. tomato DC3000.</title>
        <authorList>
            <person name="Buell C.R."/>
            <person name="Joardar V."/>
            <person name="Lindeberg M."/>
            <person name="Selengut J."/>
            <person name="Paulsen I.T."/>
            <person name="Gwinn M.L."/>
            <person name="Dodson R.J."/>
            <person name="DeBoy R.T."/>
            <person name="Durkin A.S."/>
            <person name="Kolonay J.F."/>
            <person name="Madupu R."/>
            <person name="Daugherty S.C."/>
            <person name="Brinkac L.M."/>
            <person name="Beanan M.J."/>
            <person name="Haft D.H."/>
            <person name="Nelson W.C."/>
            <person name="Davidsen T.M."/>
            <person name="Zafar N."/>
            <person name="Zhou L."/>
            <person name="Liu J."/>
            <person name="Yuan Q."/>
            <person name="Khouri H.M."/>
            <person name="Fedorova N.B."/>
            <person name="Tran B."/>
            <person name="Russell D."/>
            <person name="Berry K.J."/>
            <person name="Utterback T.R."/>
            <person name="Van Aken S.E."/>
            <person name="Feldblyum T.V."/>
            <person name="D'Ascenzo M."/>
            <person name="Deng W.-L."/>
            <person name="Ramos A.R."/>
            <person name="Alfano J.R."/>
            <person name="Cartinhour S."/>
            <person name="Chatterjee A.K."/>
            <person name="Delaney T.P."/>
            <person name="Lazarowitz S.G."/>
            <person name="Martin G.B."/>
            <person name="Schneider D.J."/>
            <person name="Tang X."/>
            <person name="Bender C.L."/>
            <person name="White O."/>
            <person name="Fraser C.M."/>
            <person name="Collmer A."/>
        </authorList>
    </citation>
    <scope>NUCLEOTIDE SEQUENCE [LARGE SCALE GENOMIC DNA]</scope>
    <source>
        <strain>ATCC BAA-871 / DC3000</strain>
    </source>
</reference>
<keyword id="KW-0488">Methylation</keyword>
<keyword id="KW-1185">Reference proteome</keyword>
<keyword id="KW-0687">Ribonucleoprotein</keyword>
<keyword id="KW-0689">Ribosomal protein</keyword>
<keyword id="KW-0694">RNA-binding</keyword>
<keyword id="KW-0699">rRNA-binding</keyword>
<proteinExistence type="inferred from homology"/>
<accession>Q889Y2</accession>
<feature type="chain" id="PRO_0000104345" description="Large ribosomal subunit protein uL11">
    <location>
        <begin position="1"/>
        <end position="143"/>
    </location>
</feature>
<gene>
    <name evidence="1" type="primary">rplK</name>
    <name type="ordered locus">PSPTO_0615</name>
</gene>
<evidence type="ECO:0000255" key="1">
    <source>
        <dbReference type="HAMAP-Rule" id="MF_00736"/>
    </source>
</evidence>
<evidence type="ECO:0000305" key="2"/>
<dbReference type="EMBL" id="AE016853">
    <property type="protein sequence ID" value="AAO54157.1"/>
    <property type="molecule type" value="Genomic_DNA"/>
</dbReference>
<dbReference type="RefSeq" id="NP_790462.1">
    <property type="nucleotide sequence ID" value="NC_004578.1"/>
</dbReference>
<dbReference type="RefSeq" id="WP_002555500.1">
    <property type="nucleotide sequence ID" value="NC_004578.1"/>
</dbReference>
<dbReference type="SMR" id="Q889Y2"/>
<dbReference type="STRING" id="223283.PSPTO_0615"/>
<dbReference type="GeneID" id="77280385"/>
<dbReference type="KEGG" id="pst:PSPTO_0615"/>
<dbReference type="PATRIC" id="fig|223283.9.peg.621"/>
<dbReference type="eggNOG" id="COG0080">
    <property type="taxonomic scope" value="Bacteria"/>
</dbReference>
<dbReference type="HOGENOM" id="CLU_074237_2_0_6"/>
<dbReference type="OrthoDB" id="9802408at2"/>
<dbReference type="PhylomeDB" id="Q889Y2"/>
<dbReference type="Proteomes" id="UP000002515">
    <property type="component" value="Chromosome"/>
</dbReference>
<dbReference type="GO" id="GO:0022625">
    <property type="term" value="C:cytosolic large ribosomal subunit"/>
    <property type="evidence" value="ECO:0007669"/>
    <property type="project" value="TreeGrafter"/>
</dbReference>
<dbReference type="GO" id="GO:0070180">
    <property type="term" value="F:large ribosomal subunit rRNA binding"/>
    <property type="evidence" value="ECO:0007669"/>
    <property type="project" value="UniProtKB-UniRule"/>
</dbReference>
<dbReference type="GO" id="GO:0003735">
    <property type="term" value="F:structural constituent of ribosome"/>
    <property type="evidence" value="ECO:0007669"/>
    <property type="project" value="InterPro"/>
</dbReference>
<dbReference type="GO" id="GO:0006412">
    <property type="term" value="P:translation"/>
    <property type="evidence" value="ECO:0007669"/>
    <property type="project" value="UniProtKB-UniRule"/>
</dbReference>
<dbReference type="CDD" id="cd00349">
    <property type="entry name" value="Ribosomal_L11"/>
    <property type="match status" value="1"/>
</dbReference>
<dbReference type="FunFam" id="1.10.10.250:FF:000001">
    <property type="entry name" value="50S ribosomal protein L11"/>
    <property type="match status" value="1"/>
</dbReference>
<dbReference type="FunFam" id="3.30.1550.10:FF:000001">
    <property type="entry name" value="50S ribosomal protein L11"/>
    <property type="match status" value="1"/>
</dbReference>
<dbReference type="Gene3D" id="1.10.10.250">
    <property type="entry name" value="Ribosomal protein L11, C-terminal domain"/>
    <property type="match status" value="1"/>
</dbReference>
<dbReference type="Gene3D" id="3.30.1550.10">
    <property type="entry name" value="Ribosomal protein L11/L12, N-terminal domain"/>
    <property type="match status" value="1"/>
</dbReference>
<dbReference type="HAMAP" id="MF_00736">
    <property type="entry name" value="Ribosomal_uL11"/>
    <property type="match status" value="1"/>
</dbReference>
<dbReference type="InterPro" id="IPR000911">
    <property type="entry name" value="Ribosomal_uL11"/>
</dbReference>
<dbReference type="InterPro" id="IPR006519">
    <property type="entry name" value="Ribosomal_uL11_bac-typ"/>
</dbReference>
<dbReference type="InterPro" id="IPR020783">
    <property type="entry name" value="Ribosomal_uL11_C"/>
</dbReference>
<dbReference type="InterPro" id="IPR036769">
    <property type="entry name" value="Ribosomal_uL11_C_sf"/>
</dbReference>
<dbReference type="InterPro" id="IPR020785">
    <property type="entry name" value="Ribosomal_uL11_CS"/>
</dbReference>
<dbReference type="InterPro" id="IPR020784">
    <property type="entry name" value="Ribosomal_uL11_N"/>
</dbReference>
<dbReference type="InterPro" id="IPR036796">
    <property type="entry name" value="Ribosomal_uL11_N_sf"/>
</dbReference>
<dbReference type="NCBIfam" id="TIGR01632">
    <property type="entry name" value="L11_bact"/>
    <property type="match status" value="1"/>
</dbReference>
<dbReference type="PANTHER" id="PTHR11661">
    <property type="entry name" value="60S RIBOSOMAL PROTEIN L12"/>
    <property type="match status" value="1"/>
</dbReference>
<dbReference type="PANTHER" id="PTHR11661:SF1">
    <property type="entry name" value="LARGE RIBOSOMAL SUBUNIT PROTEIN UL11M"/>
    <property type="match status" value="1"/>
</dbReference>
<dbReference type="Pfam" id="PF00298">
    <property type="entry name" value="Ribosomal_L11"/>
    <property type="match status" value="1"/>
</dbReference>
<dbReference type="Pfam" id="PF03946">
    <property type="entry name" value="Ribosomal_L11_N"/>
    <property type="match status" value="1"/>
</dbReference>
<dbReference type="SMART" id="SM00649">
    <property type="entry name" value="RL11"/>
    <property type="match status" value="1"/>
</dbReference>
<dbReference type="SUPFAM" id="SSF54747">
    <property type="entry name" value="Ribosomal L11/L12e N-terminal domain"/>
    <property type="match status" value="1"/>
</dbReference>
<dbReference type="SUPFAM" id="SSF46906">
    <property type="entry name" value="Ribosomal protein L11, C-terminal domain"/>
    <property type="match status" value="1"/>
</dbReference>
<dbReference type="PROSITE" id="PS00359">
    <property type="entry name" value="RIBOSOMAL_L11"/>
    <property type="match status" value="1"/>
</dbReference>
<organism>
    <name type="scientific">Pseudomonas syringae pv. tomato (strain ATCC BAA-871 / DC3000)</name>
    <dbReference type="NCBI Taxonomy" id="223283"/>
    <lineage>
        <taxon>Bacteria</taxon>
        <taxon>Pseudomonadati</taxon>
        <taxon>Pseudomonadota</taxon>
        <taxon>Gammaproteobacteria</taxon>
        <taxon>Pseudomonadales</taxon>
        <taxon>Pseudomonadaceae</taxon>
        <taxon>Pseudomonas</taxon>
    </lineage>
</organism>
<comment type="function">
    <text evidence="1">Forms part of the ribosomal stalk which helps the ribosome interact with GTP-bound translation factors.</text>
</comment>
<comment type="subunit">
    <text evidence="1">Part of the ribosomal stalk of the 50S ribosomal subunit. Interacts with L10 and the large rRNA to form the base of the stalk. L10 forms an elongated spine to which L12 dimers bind in a sequential fashion forming a multimeric L10(L12)X complex.</text>
</comment>
<comment type="PTM">
    <text evidence="1">One or more lysine residues are methylated.</text>
</comment>
<comment type="similarity">
    <text evidence="1">Belongs to the universal ribosomal protein uL11 family.</text>
</comment>
<sequence length="143" mass="14882">MAKKITAYIKLQVKAAQANPSPPVGPALGQHGVNIMEFCKAFNARTQGIEPGLPTPVIITVYSDRSFTFETKSTPASVLLKKAAGLTSGSARPNTVKVGTVTRAQLEDIAKAKNADLTAADMEAAVRTIAGSARSMGLNVEGV</sequence>
<name>RL11_PSESM</name>